<sequence length="432" mass="47337">MNPVVDILSLDHEGHGVARLDGKVTFVDGALAGERAEIAIFRKHAKYNSANAVAILAPSAQRAEPRCRYFGRCGGCSMQHLEPSAQVAAKQRVLEENLARIGKVRPSVLLPALHGPSWGYRGRARLSVRRVEKKGGVLVGFHEKRSSFIADMASCEVLAPGVSALIQPLRELIGRLSNADRIPQIEVAAGEHVIVLVFRLLEPWNDDDAAHVRAFADAHHVQVWEQRKGPETARPFWPDIAPELSYGLPEFGLVMPFRPTEFTQVNSAINRALVSRALRLLDPRPGERIADLFCGLGNFTLPIAHRGADVLGIEGSTELVARARENALRNALPHARFEVDNLFEMTPEKFAALGPFDKLLIDPPRSGAIEVVKSLPEAGAPRRIVYVSCDPATLARDAEVLVHVKGYRLEAAGVANMFPHTAHVESIALFER</sequence>
<name>RLMD_THIDA</name>
<reference key="1">
    <citation type="journal article" date="2006" name="J. Bacteriol.">
        <title>The genome sequence of the obligately chemolithoautotrophic, facultatively anaerobic bacterium Thiobacillus denitrificans.</title>
        <authorList>
            <person name="Beller H.R."/>
            <person name="Chain P.S."/>
            <person name="Letain T.E."/>
            <person name="Chakicherla A."/>
            <person name="Larimer F.W."/>
            <person name="Richardson P.M."/>
            <person name="Coleman M.A."/>
            <person name="Wood A.P."/>
            <person name="Kelly D.P."/>
        </authorList>
    </citation>
    <scope>NUCLEOTIDE SEQUENCE [LARGE SCALE GENOMIC DNA]</scope>
    <source>
        <strain>ATCC 25259 / T1</strain>
    </source>
</reference>
<gene>
    <name evidence="1" type="primary">rlmD</name>
    <name type="synonym">rumA</name>
    <name type="ordered locus">Tbd_0970</name>
</gene>
<keyword id="KW-0004">4Fe-4S</keyword>
<keyword id="KW-0408">Iron</keyword>
<keyword id="KW-0411">Iron-sulfur</keyword>
<keyword id="KW-0479">Metal-binding</keyword>
<keyword id="KW-0489">Methyltransferase</keyword>
<keyword id="KW-1185">Reference proteome</keyword>
<keyword id="KW-0698">rRNA processing</keyword>
<keyword id="KW-0949">S-adenosyl-L-methionine</keyword>
<keyword id="KW-0808">Transferase</keyword>
<organism>
    <name type="scientific">Thiobacillus denitrificans (strain ATCC 25259 / T1)</name>
    <dbReference type="NCBI Taxonomy" id="292415"/>
    <lineage>
        <taxon>Bacteria</taxon>
        <taxon>Pseudomonadati</taxon>
        <taxon>Pseudomonadota</taxon>
        <taxon>Betaproteobacteria</taxon>
        <taxon>Nitrosomonadales</taxon>
        <taxon>Thiobacillaceae</taxon>
        <taxon>Thiobacillus</taxon>
    </lineage>
</organism>
<accession>Q3SK67</accession>
<evidence type="ECO:0000255" key="1">
    <source>
        <dbReference type="HAMAP-Rule" id="MF_01010"/>
    </source>
</evidence>
<dbReference type="EC" id="2.1.1.190" evidence="1"/>
<dbReference type="EMBL" id="CP000116">
    <property type="protein sequence ID" value="AAZ96923.1"/>
    <property type="molecule type" value="Genomic_DNA"/>
</dbReference>
<dbReference type="RefSeq" id="WP_011311482.1">
    <property type="nucleotide sequence ID" value="NC_007404.1"/>
</dbReference>
<dbReference type="SMR" id="Q3SK67"/>
<dbReference type="STRING" id="292415.Tbd_0970"/>
<dbReference type="KEGG" id="tbd:Tbd_0970"/>
<dbReference type="eggNOG" id="COG2265">
    <property type="taxonomic scope" value="Bacteria"/>
</dbReference>
<dbReference type="HOGENOM" id="CLU_014689_8_2_4"/>
<dbReference type="OrthoDB" id="9804590at2"/>
<dbReference type="Proteomes" id="UP000008291">
    <property type="component" value="Chromosome"/>
</dbReference>
<dbReference type="GO" id="GO:0051539">
    <property type="term" value="F:4 iron, 4 sulfur cluster binding"/>
    <property type="evidence" value="ECO:0007669"/>
    <property type="project" value="UniProtKB-KW"/>
</dbReference>
<dbReference type="GO" id="GO:0005506">
    <property type="term" value="F:iron ion binding"/>
    <property type="evidence" value="ECO:0007669"/>
    <property type="project" value="UniProtKB-UniRule"/>
</dbReference>
<dbReference type="GO" id="GO:0003723">
    <property type="term" value="F:RNA binding"/>
    <property type="evidence" value="ECO:0007669"/>
    <property type="project" value="InterPro"/>
</dbReference>
<dbReference type="GO" id="GO:0070041">
    <property type="term" value="F:rRNA (uridine-C5-)-methyltransferase activity"/>
    <property type="evidence" value="ECO:0007669"/>
    <property type="project" value="UniProtKB-UniRule"/>
</dbReference>
<dbReference type="GO" id="GO:0070475">
    <property type="term" value="P:rRNA base methylation"/>
    <property type="evidence" value="ECO:0007669"/>
    <property type="project" value="TreeGrafter"/>
</dbReference>
<dbReference type="CDD" id="cd02440">
    <property type="entry name" value="AdoMet_MTases"/>
    <property type="match status" value="1"/>
</dbReference>
<dbReference type="Gene3D" id="2.40.50.1070">
    <property type="match status" value="1"/>
</dbReference>
<dbReference type="Gene3D" id="2.40.50.140">
    <property type="entry name" value="Nucleic acid-binding proteins"/>
    <property type="match status" value="1"/>
</dbReference>
<dbReference type="Gene3D" id="3.40.50.150">
    <property type="entry name" value="Vaccinia Virus protein VP39"/>
    <property type="match status" value="1"/>
</dbReference>
<dbReference type="HAMAP" id="MF_01010">
    <property type="entry name" value="23SrRNA_methyltr_RlmD"/>
    <property type="match status" value="1"/>
</dbReference>
<dbReference type="InterPro" id="IPR001566">
    <property type="entry name" value="23S_rRNA_MeTrfase_RlmD"/>
</dbReference>
<dbReference type="InterPro" id="IPR030390">
    <property type="entry name" value="MeTrfase_TrmA_AS"/>
</dbReference>
<dbReference type="InterPro" id="IPR012340">
    <property type="entry name" value="NA-bd_OB-fold"/>
</dbReference>
<dbReference type="InterPro" id="IPR029063">
    <property type="entry name" value="SAM-dependent_MTases_sf"/>
</dbReference>
<dbReference type="InterPro" id="IPR002792">
    <property type="entry name" value="TRAM_dom"/>
</dbReference>
<dbReference type="InterPro" id="IPR010280">
    <property type="entry name" value="U5_MeTrfase_fam"/>
</dbReference>
<dbReference type="NCBIfam" id="NF009639">
    <property type="entry name" value="PRK13168.1"/>
    <property type="match status" value="1"/>
</dbReference>
<dbReference type="PANTHER" id="PTHR11061:SF49">
    <property type="entry name" value="23S RRNA (URACIL(1939)-C(5))-METHYLTRANSFERASE RLMD"/>
    <property type="match status" value="1"/>
</dbReference>
<dbReference type="PANTHER" id="PTHR11061">
    <property type="entry name" value="RNA M5U METHYLTRANSFERASE"/>
    <property type="match status" value="1"/>
</dbReference>
<dbReference type="Pfam" id="PF01938">
    <property type="entry name" value="TRAM"/>
    <property type="match status" value="1"/>
</dbReference>
<dbReference type="Pfam" id="PF05958">
    <property type="entry name" value="tRNA_U5-meth_tr"/>
    <property type="match status" value="1"/>
</dbReference>
<dbReference type="SUPFAM" id="SSF50249">
    <property type="entry name" value="Nucleic acid-binding proteins"/>
    <property type="match status" value="1"/>
</dbReference>
<dbReference type="SUPFAM" id="SSF53335">
    <property type="entry name" value="S-adenosyl-L-methionine-dependent methyltransferases"/>
    <property type="match status" value="1"/>
</dbReference>
<dbReference type="PROSITE" id="PS51687">
    <property type="entry name" value="SAM_MT_RNA_M5U"/>
    <property type="match status" value="1"/>
</dbReference>
<dbReference type="PROSITE" id="PS50926">
    <property type="entry name" value="TRAM"/>
    <property type="match status" value="1"/>
</dbReference>
<dbReference type="PROSITE" id="PS01230">
    <property type="entry name" value="TRMA_1"/>
    <property type="match status" value="1"/>
</dbReference>
<comment type="function">
    <text evidence="1">Catalyzes the formation of 5-methyl-uridine at position 1939 (m5U1939) in 23S rRNA.</text>
</comment>
<comment type="catalytic activity">
    <reaction evidence="1">
        <text>uridine(1939) in 23S rRNA + S-adenosyl-L-methionine = 5-methyluridine(1939) in 23S rRNA + S-adenosyl-L-homocysteine + H(+)</text>
        <dbReference type="Rhea" id="RHEA:42908"/>
        <dbReference type="Rhea" id="RHEA-COMP:10278"/>
        <dbReference type="Rhea" id="RHEA-COMP:10279"/>
        <dbReference type="ChEBI" id="CHEBI:15378"/>
        <dbReference type="ChEBI" id="CHEBI:57856"/>
        <dbReference type="ChEBI" id="CHEBI:59789"/>
        <dbReference type="ChEBI" id="CHEBI:65315"/>
        <dbReference type="ChEBI" id="CHEBI:74447"/>
        <dbReference type="EC" id="2.1.1.190"/>
    </reaction>
</comment>
<comment type="similarity">
    <text evidence="1">Belongs to the class I-like SAM-binding methyltransferase superfamily. RNA M5U methyltransferase family. RlmD subfamily.</text>
</comment>
<feature type="chain" id="PRO_0000229886" description="23S rRNA (uracil(1939)-C(5))-methyltransferase RlmD">
    <location>
        <begin position="1"/>
        <end position="432"/>
    </location>
</feature>
<feature type="domain" description="TRAM" evidence="1">
    <location>
        <begin position="1"/>
        <end position="54"/>
    </location>
</feature>
<feature type="active site" description="Nucleophile" evidence="1">
    <location>
        <position position="389"/>
    </location>
</feature>
<feature type="binding site" evidence="1">
    <location>
        <position position="67"/>
    </location>
    <ligand>
        <name>[4Fe-4S] cluster</name>
        <dbReference type="ChEBI" id="CHEBI:49883"/>
    </ligand>
</feature>
<feature type="binding site" evidence="1">
    <location>
        <position position="73"/>
    </location>
    <ligand>
        <name>[4Fe-4S] cluster</name>
        <dbReference type="ChEBI" id="CHEBI:49883"/>
    </ligand>
</feature>
<feature type="binding site" evidence="1">
    <location>
        <position position="76"/>
    </location>
    <ligand>
        <name>[4Fe-4S] cluster</name>
        <dbReference type="ChEBI" id="CHEBI:49883"/>
    </ligand>
</feature>
<feature type="binding site" evidence="1">
    <location>
        <position position="155"/>
    </location>
    <ligand>
        <name>[4Fe-4S] cluster</name>
        <dbReference type="ChEBI" id="CHEBI:49883"/>
    </ligand>
</feature>
<feature type="binding site" evidence="1">
    <location>
        <position position="264"/>
    </location>
    <ligand>
        <name>S-adenosyl-L-methionine</name>
        <dbReference type="ChEBI" id="CHEBI:59789"/>
    </ligand>
</feature>
<feature type="binding site" evidence="1">
    <location>
        <position position="293"/>
    </location>
    <ligand>
        <name>S-adenosyl-L-methionine</name>
        <dbReference type="ChEBI" id="CHEBI:59789"/>
    </ligand>
</feature>
<feature type="binding site" evidence="1">
    <location>
        <position position="298"/>
    </location>
    <ligand>
        <name>S-adenosyl-L-methionine</name>
        <dbReference type="ChEBI" id="CHEBI:59789"/>
    </ligand>
</feature>
<feature type="binding site" evidence="1">
    <location>
        <position position="314"/>
    </location>
    <ligand>
        <name>S-adenosyl-L-methionine</name>
        <dbReference type="ChEBI" id="CHEBI:59789"/>
    </ligand>
</feature>
<feature type="binding site" evidence="1">
    <location>
        <position position="341"/>
    </location>
    <ligand>
        <name>S-adenosyl-L-methionine</name>
        <dbReference type="ChEBI" id="CHEBI:59789"/>
    </ligand>
</feature>
<feature type="binding site" evidence="1">
    <location>
        <position position="362"/>
    </location>
    <ligand>
        <name>S-adenosyl-L-methionine</name>
        <dbReference type="ChEBI" id="CHEBI:59789"/>
    </ligand>
</feature>
<proteinExistence type="inferred from homology"/>
<protein>
    <recommendedName>
        <fullName evidence="1">23S rRNA (uracil(1939)-C(5))-methyltransferase RlmD</fullName>
        <ecNumber evidence="1">2.1.1.190</ecNumber>
    </recommendedName>
    <alternativeName>
        <fullName evidence="1">23S rRNA(m5U1939)-methyltransferase</fullName>
    </alternativeName>
</protein>